<comment type="function">
    <text>Muscle contraction.</text>
</comment>
<comment type="subunit">
    <text>Muscle myosin is a hexameric protein that consists of 2 heavy chain subunits (MHC), 2 alkali light chain subunits (MLC) and 2 regulatory light chain subunits (MLC-2).</text>
</comment>
<comment type="interaction">
    <interactant intactId="EBI-299157">
        <id>Q02566</id>
    </interactant>
    <interactant intactId="EBI-8347074">
        <id>O70468</id>
        <label>Mybpc3</label>
    </interactant>
    <organismsDiffer>false</organismsDiffer>
    <experiments>5</experiments>
</comment>
<comment type="subcellular location">
    <subcellularLocation>
        <location>Cytoplasm</location>
        <location>Myofibril</location>
    </subcellularLocation>
    <text>Thick filaments of the myofibrils.</text>
</comment>
<comment type="domain">
    <text>The rodlike tail sequence is highly repetitive, showing cycles of a 28-residue repeat pattern composed of 4 heptapeptides, characteristic for alpha-helical coiled coils.</text>
</comment>
<comment type="domain">
    <text evidence="8">Limited proteolysis of myosin heavy chain produces 1 light meromyosin (LMM) and 1 heavy meromyosin (HMM). HMM can be further cleaved into 2 globular subfragments (S1) and 1 rod-shaped subfragment (S2).</text>
</comment>
<comment type="miscellaneous">
    <text>The cardiac alpha isoform is a 'fast' ATPase myosin, while the beta isoform is a 'slow' ATPase.</text>
</comment>
<comment type="similarity">
    <text evidence="8">Belongs to the TRAFAC class myosin-kinesin ATPase superfamily. Myosin family.</text>
</comment>
<comment type="caution">
    <text evidence="8">Represents a conventional myosin. This protein should not be confused with the unconventional myosin-6 (MYO6).</text>
</comment>
<gene>
    <name type="primary">Myh6</name>
    <name type="synonym">Myhca</name>
</gene>
<proteinExistence type="evidence at protein level"/>
<protein>
    <recommendedName>
        <fullName>Myosin-6</fullName>
    </recommendedName>
    <alternativeName>
        <fullName>Myosin heavy chain 6</fullName>
    </alternativeName>
    <alternativeName>
        <fullName>Myosin heavy chain, cardiac muscle alpha isoform</fullName>
        <shortName>MyHC-alpha</shortName>
    </alternativeName>
</protein>
<feature type="chain" id="PRO_0000123403" description="Myosin-6">
    <location>
        <begin position="1"/>
        <end position="1938"/>
    </location>
</feature>
<feature type="domain" description="Myosin N-terminal SH3-like" evidence="6">
    <location>
        <begin position="32"/>
        <end position="81"/>
    </location>
</feature>
<feature type="domain" description="Myosin motor" evidence="5">
    <location>
        <begin position="85"/>
        <end position="780"/>
    </location>
</feature>
<feature type="domain" description="IQ" evidence="4">
    <location>
        <begin position="783"/>
        <end position="812"/>
    </location>
</feature>
<feature type="region of interest" description="Actin-binding">
    <location>
        <begin position="657"/>
        <end position="679"/>
    </location>
</feature>
<feature type="region of interest" description="Actin-binding">
    <location>
        <begin position="759"/>
        <end position="773"/>
    </location>
</feature>
<feature type="region of interest" description="Calmodulin-binding" evidence="1">
    <location>
        <begin position="790"/>
        <end position="807"/>
    </location>
</feature>
<feature type="region of interest" description="Calmodulin-binding" evidence="1">
    <location>
        <begin position="816"/>
        <end position="833"/>
    </location>
</feature>
<feature type="region of interest" description="Disordered" evidence="7">
    <location>
        <begin position="1909"/>
        <end position="1938"/>
    </location>
</feature>
<feature type="coiled-coil region" evidence="3">
    <location>
        <begin position="842"/>
        <end position="1938"/>
    </location>
</feature>
<feature type="compositionally biased region" description="Basic and acidic residues" evidence="7">
    <location>
        <begin position="1925"/>
        <end position="1938"/>
    </location>
</feature>
<feature type="binding site">
    <location>
        <begin position="178"/>
        <end position="185"/>
    </location>
    <ligand>
        <name>ATP</name>
        <dbReference type="ChEBI" id="CHEBI:30616"/>
    </ligand>
</feature>
<feature type="modified residue" description="N6,N6,N6-trimethyllysine" evidence="3">
    <location>
        <position position="129"/>
    </location>
</feature>
<feature type="modified residue" description="Phosphothreonine" evidence="2">
    <location>
        <position position="379"/>
    </location>
</feature>
<feature type="modified residue" description="Phosphoserine" evidence="2">
    <location>
        <position position="417"/>
    </location>
</feature>
<feature type="modified residue" description="Phosphoserine" evidence="2">
    <location>
        <position position="1090"/>
    </location>
</feature>
<feature type="modified residue" description="Phosphoserine" evidence="2">
    <location>
        <position position="1139"/>
    </location>
</feature>
<feature type="modified residue" description="Phosphotyrosine" evidence="2">
    <location>
        <position position="1261"/>
    </location>
</feature>
<feature type="modified residue" description="Phosphoserine" evidence="9">
    <location>
        <position position="1271"/>
    </location>
</feature>
<feature type="modified residue" description="Phosphothreonine" evidence="2">
    <location>
        <position position="1277"/>
    </location>
</feature>
<feature type="modified residue" description="Phosphothreonine" evidence="2">
    <location>
        <position position="1284"/>
    </location>
</feature>
<feature type="modified residue" description="Phosphoserine" evidence="2">
    <location>
        <position position="1309"/>
    </location>
</feature>
<feature type="modified residue" description="Phosphotyrosine" evidence="2">
    <location>
        <position position="1310"/>
    </location>
</feature>
<feature type="modified residue" description="Phosphothreonine" evidence="2">
    <location>
        <position position="1311"/>
    </location>
</feature>
<feature type="modified residue" description="Phosphoserine" evidence="9">
    <location>
        <position position="1512"/>
    </location>
</feature>
<feature type="modified residue" description="Phosphothreonine" evidence="2">
    <location>
        <position position="1515"/>
    </location>
</feature>
<feature type="sequence variant">
    <original>Y</original>
    <variation>D</variation>
    <location>
        <position position="194"/>
    </location>
</feature>
<feature type="sequence variant">
    <original>S</original>
    <variation>A</variation>
    <location>
        <position position="545"/>
    </location>
</feature>
<feature type="sequence variant">
    <original>I</original>
    <variation>S</variation>
    <location>
        <position position="838"/>
    </location>
</feature>
<accession>Q02566</accession>
<accession>Q64258</accession>
<accession>Q64738</accession>
<keyword id="KW-0002">3D-structure</keyword>
<keyword id="KW-0009">Actin-binding</keyword>
<keyword id="KW-0067">ATP-binding</keyword>
<keyword id="KW-0112">Calmodulin-binding</keyword>
<keyword id="KW-0175">Coiled coil</keyword>
<keyword id="KW-0963">Cytoplasm</keyword>
<keyword id="KW-0488">Methylation</keyword>
<keyword id="KW-0505">Motor protein</keyword>
<keyword id="KW-0514">Muscle protein</keyword>
<keyword id="KW-0518">Myosin</keyword>
<keyword id="KW-0547">Nucleotide-binding</keyword>
<keyword id="KW-0597">Phosphoprotein</keyword>
<keyword id="KW-1185">Reference proteome</keyword>
<keyword id="KW-0787">Thick filament</keyword>
<sequence length="1938" mass="223565">MTDAQMADFGAAAQYLRKSEKERLEAQTRPFDIRTECFVPDDKEEYVKAKVVSREGGKVTAETENGKTVTIKEDQVMQQNPPKFDKIEDMAMLTFLHEPAVLYNLKERYAAWMIYTYSGLFCVTVNPYKWLPVYNAEVVAAYRGKKRSEAPPHIFSISDNAYQYMLTDRENQSILITGESGAGKTVNTKRVIQYFASIAAIGDRSKKENPNANKGTLEDQIIQANPALEAFGNAKTVRNDNSSRFGKFIRIHFGATGKLASADIETYLLEKSRVIFQLKAERNYHIFYQILSNKKPELLDMLLVTNNPYDYAFVSQGEVSVASIDDSEELLATDSAFDVLSFTAEEKAGVYKLTGAIMHYGNMKFKQKQREEQAEPDGTEDADKSAYLMGLNSADLLKGLCHPRVKVGNEYVTKGQSVQQVYYSIGALAKSVYEKMFNWMVTRINATLETKQPRQYFIGVLDIAGFEIFDFNSFEQLCINFTNEKLQQFFNHHMFVLEQEEYKKEGIEWEFIDFGMDLQACIDLIEKPMGIMSILEEECMFPKASDMTFKAKLYDNHLGKSNNFQKPRNVKGKQEAHFSLVHYAGTVDYNIMGWLEKNKDPLNETVVGLYQKSSLKLMATLFSTYASADTGDSGKGKGGKKKGSSFQTVSALHRENLNKLMTNLKTTHPHFVRCIIPNERKAPGVMDNPLVMHQLRCNGVLEGIRICRKGFPNRILYGDFRQRYRILNPAAIPEGQFIDSRKGAEKLLGSLDIDHNQYKFGHTKVFFKAGLLGLLEEMRDERLSRIITRIQAQARGQLMRIEFKKIVERRDALLVIQWNIRAFMGVKNWPWMKLYFKIKPLLKSAETEKEMANMKEEFGRVKDALEKSEARRKELEEKMVSLLQEKNDLQLQVQAEQDNLNDAEERCDQLIKNKIQLEAKVKEMTERLEDEEEMNAELTAKKRKLEDECSELKKDIDDLELTLAKVEKEKHATENKVKNLTEEMAGLDEIIAKLTKEKKALQEAHQQALDDLQAEEDKVNTLTKSKVKLEQQVDDLEGSLEQEKKVRMDLERAKRKLEGDLKLTQESIMDLENDKLQLEEKLKKKEFDISQQNSKIEDEQALALQLQKKLKENQARIEELEEELEAERTARAKVEKLRSDLSRELEEISERLEEAGGATSVQIEMNKKREAEFQKMRRDLEEATLQHEATAAALRKKHADSVAELGEQIDNLQRVKQKLEKEKSEFKLELDDVTSNMEQIIKAKANLEKVSRTLEDQANEYRVKLEEAQRSLNDFTTQRAKLQTENGELARQLEEKEALISQLTRGKLSYTQQMEDLKRQLEEEGKAKNALAHALQSSRHDCDLLREQYEEEMEAKAELQRVLSKANSEVAQWRTKYETDAIQRTEELEEAKKKLAQRLQDAEEAVEAVNAKCSSLEKTKHRLQNEIEDLMVDVERSNAAAAALDKKQRNFDKILAEWKQKYEESQSELESSQKEARSLSTELFKLKNAYEESLEHLETFKRENKNLQEEISDLTEQLGEGGKNVHELEKIRKQLEVEKLELQSALEEAEASLEHEEGKILRAQLEFNQIKAEIERKLAEKDEEMEQAKRNHLRMVDSLQTSLDAETRSRNEALRVKKKMEGDLNEMEIQLSQANRIASEAQKHLKNSQAHLKDTQLQLDDAVHANDDLKENIAIVERRNNLLQAELEELRAVVEQTERSRKLAEQELIETSERVQLLHSQNTSLINQKKKMESDLTQLQTEVEEAVQECRNAEEKAKKAITDAAMMAEELKKEQDTSAHLERMKKNMEQTIKDLQHRLDEAEQIALKGGKKQLQKLEARVRELENELEAEQKRNAESVKGMRKSERRIKELTYQTEEDKKNLMRLQDLVDKLQLKVKAYKRQAEEAEEQANTNLSKFRKVQHELDEAEERADIAESQVNKLRAKSRDIGAKKMHDEE</sequence>
<name>MYH6_MOUSE</name>
<reference key="1">
    <citation type="journal article" date="1992" name="Genomics">
        <title>Characterization of the allelic differences in the mouse cardiac alpha-myosin heavy chain coding sequence.</title>
        <authorList>
            <person name="Quinn-Laquer B.K."/>
            <person name="Kennedy J.E."/>
            <person name="Wei S.J."/>
            <person name="Beisel K.W."/>
        </authorList>
    </citation>
    <scope>NUCLEOTIDE SEQUENCE [MRNA]</scope>
    <source>
        <strain>A/J</strain>
        <strain>BALB/cJ</strain>
        <strain>C57BL/6J</strain>
        <strain>DBA/2J</strain>
    </source>
</reference>
<reference key="2">
    <citation type="journal article" date="1991" name="J. Biol. Chem.">
        <title>Isolation and characterization of the mouse cardiac myosin heavy chain genes.</title>
        <authorList>
            <person name="Gulick J."/>
            <person name="Subramaniam A."/>
            <person name="Neumann J."/>
            <person name="Robbins J."/>
        </authorList>
    </citation>
    <scope>NUCLEOTIDE SEQUENCE [GENOMIC DNA] OF 1-67</scope>
    <source>
        <strain>AKR/J</strain>
    </source>
</reference>
<reference key="3">
    <citation type="journal article" date="2010" name="Cell">
        <title>A tissue-specific atlas of mouse protein phosphorylation and expression.</title>
        <authorList>
            <person name="Huttlin E.L."/>
            <person name="Jedrychowski M.P."/>
            <person name="Elias J.E."/>
            <person name="Goswami T."/>
            <person name="Rad R."/>
            <person name="Beausoleil S.A."/>
            <person name="Villen J."/>
            <person name="Haas W."/>
            <person name="Sowa M.E."/>
            <person name="Gygi S.P."/>
        </authorList>
    </citation>
    <scope>PHOSPHORYLATION [LARGE SCALE ANALYSIS] AT SER-1271 AND SER-1512</scope>
    <scope>IDENTIFICATION BY MASS SPECTROMETRY [LARGE SCALE ANALYSIS]</scope>
    <source>
        <tissue>Heart</tissue>
    </source>
</reference>
<evidence type="ECO:0000250" key="1"/>
<evidence type="ECO:0000250" key="2">
    <source>
        <dbReference type="UniProtKB" id="P02563"/>
    </source>
</evidence>
<evidence type="ECO:0000255" key="3"/>
<evidence type="ECO:0000255" key="4">
    <source>
        <dbReference type="PROSITE-ProRule" id="PRU00116"/>
    </source>
</evidence>
<evidence type="ECO:0000255" key="5">
    <source>
        <dbReference type="PROSITE-ProRule" id="PRU00782"/>
    </source>
</evidence>
<evidence type="ECO:0000255" key="6">
    <source>
        <dbReference type="PROSITE-ProRule" id="PRU01190"/>
    </source>
</evidence>
<evidence type="ECO:0000256" key="7">
    <source>
        <dbReference type="SAM" id="MobiDB-lite"/>
    </source>
</evidence>
<evidence type="ECO:0000305" key="8"/>
<evidence type="ECO:0007744" key="9">
    <source>
    </source>
</evidence>
<organism>
    <name type="scientific">Mus musculus</name>
    <name type="common">Mouse</name>
    <dbReference type="NCBI Taxonomy" id="10090"/>
    <lineage>
        <taxon>Eukaryota</taxon>
        <taxon>Metazoa</taxon>
        <taxon>Chordata</taxon>
        <taxon>Craniata</taxon>
        <taxon>Vertebrata</taxon>
        <taxon>Euteleostomi</taxon>
        <taxon>Mammalia</taxon>
        <taxon>Eutheria</taxon>
        <taxon>Euarchontoglires</taxon>
        <taxon>Glires</taxon>
        <taxon>Rodentia</taxon>
        <taxon>Myomorpha</taxon>
        <taxon>Muroidea</taxon>
        <taxon>Muridae</taxon>
        <taxon>Murinae</taxon>
        <taxon>Mus</taxon>
        <taxon>Mus</taxon>
    </lineage>
</organism>
<dbReference type="EMBL" id="M76598">
    <property type="protein sequence ID" value="AAA37159.1"/>
    <property type="molecule type" value="mRNA"/>
</dbReference>
<dbReference type="EMBL" id="M76599">
    <property type="protein sequence ID" value="AAA37160.1"/>
    <property type="molecule type" value="mRNA"/>
</dbReference>
<dbReference type="EMBL" id="M76600">
    <property type="protein sequence ID" value="AAA37161.1"/>
    <property type="molecule type" value="mRNA"/>
</dbReference>
<dbReference type="EMBL" id="M76601">
    <property type="protein sequence ID" value="AAA37162.1"/>
    <property type="molecule type" value="mRNA"/>
</dbReference>
<dbReference type="EMBL" id="M62404">
    <property type="protein sequence ID" value="AAA37424.1"/>
    <property type="molecule type" value="Genomic_DNA"/>
</dbReference>
<dbReference type="CCDS" id="CCDS36927.1"/>
<dbReference type="PIR" id="I49464">
    <property type="entry name" value="I49464"/>
</dbReference>
<dbReference type="RefSeq" id="NP_001157643.1">
    <property type="nucleotide sequence ID" value="NM_001164171.1"/>
</dbReference>
<dbReference type="RefSeq" id="NP_034986.1">
    <property type="nucleotide sequence ID" value="NM_010856.4"/>
</dbReference>
<dbReference type="RefSeq" id="XP_036014396.1">
    <property type="nucleotide sequence ID" value="XM_036158503.1"/>
</dbReference>
<dbReference type="PDB" id="8ZBK">
    <property type="method" value="EM"/>
    <property type="resolution" value="4.28 A"/>
    <property type="chains" value="A/C/F/G/H/L=4-775"/>
</dbReference>
<dbReference type="PDB" id="8ZBN">
    <property type="method" value="EM"/>
    <property type="resolution" value="3.02 A"/>
    <property type="chains" value="A/C/F/G/H/L=4-775"/>
</dbReference>
<dbReference type="PDB" id="8ZIP">
    <property type="method" value="EM"/>
    <property type="resolution" value="4.90 A"/>
    <property type="chains" value="C=4-775"/>
</dbReference>
<dbReference type="PDB" id="8ZIU">
    <property type="method" value="EM"/>
    <property type="resolution" value="3.54 A"/>
    <property type="chains" value="C=4-775"/>
</dbReference>
<dbReference type="PDBsum" id="8ZBK"/>
<dbReference type="PDBsum" id="8ZBN"/>
<dbReference type="PDBsum" id="8ZIP"/>
<dbReference type="PDBsum" id="8ZIU"/>
<dbReference type="EMDB" id="EMD-39904"/>
<dbReference type="EMDB" id="EMD-39906"/>
<dbReference type="EMDB" id="EMD-60125"/>
<dbReference type="EMDB" id="EMD-60130"/>
<dbReference type="SMR" id="Q02566"/>
<dbReference type="BioGRID" id="201651">
    <property type="interactions" value="36"/>
</dbReference>
<dbReference type="DIP" id="DIP-31385N"/>
<dbReference type="FunCoup" id="Q02566">
    <property type="interactions" value="395"/>
</dbReference>
<dbReference type="IntAct" id="Q02566">
    <property type="interactions" value="3"/>
</dbReference>
<dbReference type="STRING" id="10090.ENSMUSP00000080538"/>
<dbReference type="GlyGen" id="Q02566">
    <property type="glycosylation" value="1 site, 1 O-linked glycan (1 site)"/>
</dbReference>
<dbReference type="iPTMnet" id="Q02566"/>
<dbReference type="PhosphoSitePlus" id="Q02566"/>
<dbReference type="SwissPalm" id="Q02566"/>
<dbReference type="jPOST" id="Q02566"/>
<dbReference type="PaxDb" id="10090-ENSMUSP00000080538"/>
<dbReference type="ProteomicsDB" id="287656"/>
<dbReference type="ABCD" id="Q02566">
    <property type="antibodies" value="6 sequenced antibodies"/>
</dbReference>
<dbReference type="Antibodypedia" id="91">
    <property type="antibodies" value="169 antibodies from 27 providers"/>
</dbReference>
<dbReference type="DNASU" id="17888"/>
<dbReference type="Ensembl" id="ENSMUST00000081857.14">
    <property type="protein sequence ID" value="ENSMUSP00000080538.7"/>
    <property type="gene ID" value="ENSMUSG00000040752.17"/>
</dbReference>
<dbReference type="Ensembl" id="ENSMUST00000226297.2">
    <property type="protein sequence ID" value="ENSMUSP00000154634.2"/>
    <property type="gene ID" value="ENSMUSG00000040752.17"/>
</dbReference>
<dbReference type="GeneID" id="17888"/>
<dbReference type="KEGG" id="mmu:17888"/>
<dbReference type="UCSC" id="uc007txr.2">
    <property type="organism name" value="mouse"/>
</dbReference>
<dbReference type="AGR" id="MGI:97255"/>
<dbReference type="CTD" id="4624"/>
<dbReference type="MGI" id="MGI:97255">
    <property type="gene designation" value="Myh6"/>
</dbReference>
<dbReference type="VEuPathDB" id="HostDB:ENSMUSG00000040752"/>
<dbReference type="eggNOG" id="KOG0161">
    <property type="taxonomic scope" value="Eukaryota"/>
</dbReference>
<dbReference type="GeneTree" id="ENSGT00940000154805"/>
<dbReference type="HOGENOM" id="CLU_000192_8_0_1"/>
<dbReference type="InParanoid" id="Q02566"/>
<dbReference type="OMA" id="MVFRINH"/>
<dbReference type="OrthoDB" id="312459at2759"/>
<dbReference type="PhylomeDB" id="Q02566"/>
<dbReference type="TreeFam" id="TF314375"/>
<dbReference type="Reactome" id="R-MMU-390522">
    <property type="pathway name" value="Striated Muscle Contraction"/>
</dbReference>
<dbReference type="BioGRID-ORCS" id="17888">
    <property type="hits" value="1 hit in 77 CRISPR screens"/>
</dbReference>
<dbReference type="ChiTaRS" id="Myh6">
    <property type="organism name" value="mouse"/>
</dbReference>
<dbReference type="PRO" id="PR:Q02566"/>
<dbReference type="Proteomes" id="UP000000589">
    <property type="component" value="Chromosome 14"/>
</dbReference>
<dbReference type="RNAct" id="Q02566">
    <property type="molecule type" value="protein"/>
</dbReference>
<dbReference type="Bgee" id="ENSMUSG00000040752">
    <property type="expression patterns" value="Expressed in cardiac muscle of left ventricle and 112 other cell types or tissues"/>
</dbReference>
<dbReference type="ExpressionAtlas" id="Q02566">
    <property type="expression patterns" value="baseline and differential"/>
</dbReference>
<dbReference type="GO" id="GO:0030016">
    <property type="term" value="C:myofibril"/>
    <property type="evidence" value="ECO:0000314"/>
    <property type="project" value="MGI"/>
</dbReference>
<dbReference type="GO" id="GO:0016459">
    <property type="term" value="C:myosin complex"/>
    <property type="evidence" value="ECO:0000314"/>
    <property type="project" value="MGI"/>
</dbReference>
<dbReference type="GO" id="GO:0032982">
    <property type="term" value="C:myosin filament"/>
    <property type="evidence" value="ECO:0007669"/>
    <property type="project" value="UniProtKB-KW"/>
</dbReference>
<dbReference type="GO" id="GO:0001725">
    <property type="term" value="C:stress fiber"/>
    <property type="evidence" value="ECO:0000314"/>
    <property type="project" value="MGI"/>
</dbReference>
<dbReference type="GO" id="GO:0030018">
    <property type="term" value="C:Z disc"/>
    <property type="evidence" value="ECO:0000314"/>
    <property type="project" value="MGI"/>
</dbReference>
<dbReference type="GO" id="GO:0051015">
    <property type="term" value="F:actin filament binding"/>
    <property type="evidence" value="ECO:0007669"/>
    <property type="project" value="InterPro"/>
</dbReference>
<dbReference type="GO" id="GO:0005524">
    <property type="term" value="F:ATP binding"/>
    <property type="evidence" value="ECO:0007669"/>
    <property type="project" value="UniProtKB-KW"/>
</dbReference>
<dbReference type="GO" id="GO:0005516">
    <property type="term" value="F:calmodulin binding"/>
    <property type="evidence" value="ECO:0007669"/>
    <property type="project" value="UniProtKB-KW"/>
</dbReference>
<dbReference type="GO" id="GO:0000146">
    <property type="term" value="F:microfilament motor activity"/>
    <property type="evidence" value="ECO:0000315"/>
    <property type="project" value="MGI"/>
</dbReference>
<dbReference type="GO" id="GO:0019901">
    <property type="term" value="F:protein kinase binding"/>
    <property type="evidence" value="ECO:0007669"/>
    <property type="project" value="Ensembl"/>
</dbReference>
<dbReference type="GO" id="GO:0030048">
    <property type="term" value="P:actin filament-based movement"/>
    <property type="evidence" value="ECO:0000315"/>
    <property type="project" value="MGI"/>
</dbReference>
<dbReference type="GO" id="GO:0007512">
    <property type="term" value="P:adult heart development"/>
    <property type="evidence" value="ECO:0000315"/>
    <property type="project" value="MGI"/>
</dbReference>
<dbReference type="GO" id="GO:0046034">
    <property type="term" value="P:ATP metabolic process"/>
    <property type="evidence" value="ECO:0007669"/>
    <property type="project" value="Ensembl"/>
</dbReference>
<dbReference type="GO" id="GO:0055009">
    <property type="term" value="P:atrial cardiac muscle tissue morphogenesis"/>
    <property type="evidence" value="ECO:0007669"/>
    <property type="project" value="Ensembl"/>
</dbReference>
<dbReference type="GO" id="GO:0055013">
    <property type="term" value="P:cardiac muscle cell development"/>
    <property type="evidence" value="ECO:0000315"/>
    <property type="project" value="MGI"/>
</dbReference>
<dbReference type="GO" id="GO:0060048">
    <property type="term" value="P:cardiac muscle contraction"/>
    <property type="evidence" value="ECO:0000315"/>
    <property type="project" value="BHF-UCL"/>
</dbReference>
<dbReference type="GO" id="GO:0014898">
    <property type="term" value="P:cardiac muscle hypertrophy in response to stress"/>
    <property type="evidence" value="ECO:0000314"/>
    <property type="project" value="MGI"/>
</dbReference>
<dbReference type="GO" id="GO:0001701">
    <property type="term" value="P:in utero embryonic development"/>
    <property type="evidence" value="ECO:0000315"/>
    <property type="project" value="MGI"/>
</dbReference>
<dbReference type="GO" id="GO:0030049">
    <property type="term" value="P:muscle filament sliding"/>
    <property type="evidence" value="ECO:0007669"/>
    <property type="project" value="Ensembl"/>
</dbReference>
<dbReference type="GO" id="GO:0030239">
    <property type="term" value="P:myofibril assembly"/>
    <property type="evidence" value="ECO:0000315"/>
    <property type="project" value="MGI"/>
</dbReference>
<dbReference type="GO" id="GO:0008217">
    <property type="term" value="P:regulation of blood pressure"/>
    <property type="evidence" value="ECO:0000315"/>
    <property type="project" value="MGI"/>
</dbReference>
<dbReference type="GO" id="GO:0008016">
    <property type="term" value="P:regulation of heart contraction"/>
    <property type="evidence" value="ECO:0000315"/>
    <property type="project" value="MGI"/>
</dbReference>
<dbReference type="GO" id="GO:0060420">
    <property type="term" value="P:regulation of heart growth"/>
    <property type="evidence" value="ECO:0000314"/>
    <property type="project" value="MGI"/>
</dbReference>
<dbReference type="GO" id="GO:0002027">
    <property type="term" value="P:regulation of heart rate"/>
    <property type="evidence" value="ECO:0000315"/>
    <property type="project" value="MGI"/>
</dbReference>
<dbReference type="GO" id="GO:0002026">
    <property type="term" value="P:regulation of the force of heart contraction"/>
    <property type="evidence" value="ECO:0000315"/>
    <property type="project" value="MGI"/>
</dbReference>
<dbReference type="GO" id="GO:0045214">
    <property type="term" value="P:sarcomere organization"/>
    <property type="evidence" value="ECO:0000315"/>
    <property type="project" value="MGI"/>
</dbReference>
<dbReference type="GO" id="GO:0006941">
    <property type="term" value="P:striated muscle contraction"/>
    <property type="evidence" value="ECO:0000315"/>
    <property type="project" value="MGI"/>
</dbReference>
<dbReference type="GO" id="GO:0055010">
    <property type="term" value="P:ventricular cardiac muscle tissue morphogenesis"/>
    <property type="evidence" value="ECO:0007669"/>
    <property type="project" value="Ensembl"/>
</dbReference>
<dbReference type="GO" id="GO:0007522">
    <property type="term" value="P:visceral muscle development"/>
    <property type="evidence" value="ECO:0000315"/>
    <property type="project" value="MGI"/>
</dbReference>
<dbReference type="CDD" id="cd01377">
    <property type="entry name" value="MYSc_class_II"/>
    <property type="match status" value="1"/>
</dbReference>
<dbReference type="FunFam" id="1.10.10.820:FF:000001">
    <property type="entry name" value="Myosin heavy chain"/>
    <property type="match status" value="1"/>
</dbReference>
<dbReference type="FunFam" id="1.20.5.340:FF:000002">
    <property type="entry name" value="Myosin heavy chain"/>
    <property type="match status" value="1"/>
</dbReference>
<dbReference type="FunFam" id="1.20.5.340:FF:000003">
    <property type="entry name" value="Myosin heavy chain"/>
    <property type="match status" value="1"/>
</dbReference>
<dbReference type="FunFam" id="1.20.5.340:FF:000004">
    <property type="entry name" value="Myosin heavy chain"/>
    <property type="match status" value="1"/>
</dbReference>
<dbReference type="FunFam" id="1.20.5.340:FF:000006">
    <property type="entry name" value="Myosin heavy chain"/>
    <property type="match status" value="1"/>
</dbReference>
<dbReference type="FunFam" id="1.20.5.340:FF:000013">
    <property type="entry name" value="Myosin heavy chain"/>
    <property type="match status" value="1"/>
</dbReference>
<dbReference type="FunFam" id="1.20.5.370:FF:000001">
    <property type="entry name" value="Myosin heavy chain"/>
    <property type="match status" value="1"/>
</dbReference>
<dbReference type="FunFam" id="1.20.5.370:FF:000002">
    <property type="entry name" value="Myosin heavy chain"/>
    <property type="match status" value="1"/>
</dbReference>
<dbReference type="FunFam" id="1.20.5.370:FF:000003">
    <property type="entry name" value="Myosin heavy chain"/>
    <property type="match status" value="1"/>
</dbReference>
<dbReference type="FunFam" id="1.20.5.370:FF:000007">
    <property type="entry name" value="Myosin heavy chain"/>
    <property type="match status" value="1"/>
</dbReference>
<dbReference type="FunFam" id="1.20.5.370:FF:000008">
    <property type="entry name" value="Myosin heavy chain"/>
    <property type="match status" value="1"/>
</dbReference>
<dbReference type="FunFam" id="1.20.5.4820:FF:000001">
    <property type="entry name" value="Myosin heavy chain"/>
    <property type="match status" value="1"/>
</dbReference>
<dbReference type="FunFam" id="1.20.58.530:FF:000001">
    <property type="entry name" value="Myosin heavy chain"/>
    <property type="match status" value="1"/>
</dbReference>
<dbReference type="FunFam" id="2.30.30.360:FF:000001">
    <property type="entry name" value="Myosin heavy chain"/>
    <property type="match status" value="1"/>
</dbReference>
<dbReference type="FunFam" id="1.20.120.720:FF:000001">
    <property type="entry name" value="Myosin heavy chain, muscle"/>
    <property type="match status" value="1"/>
</dbReference>
<dbReference type="FunFam" id="3.40.850.10:FF:000115">
    <property type="entry name" value="Myosin heavy polypeptide 6"/>
    <property type="match status" value="1"/>
</dbReference>
<dbReference type="FunFam" id="3.40.850.10:FF:000101">
    <property type="entry name" value="Slow myosin heavy chain 2"/>
    <property type="match status" value="1"/>
</dbReference>
<dbReference type="Gene3D" id="1.10.10.820">
    <property type="match status" value="1"/>
</dbReference>
<dbReference type="Gene3D" id="1.20.5.340">
    <property type="match status" value="5"/>
</dbReference>
<dbReference type="Gene3D" id="1.20.5.370">
    <property type="match status" value="4"/>
</dbReference>
<dbReference type="Gene3D" id="1.20.5.4820">
    <property type="match status" value="1"/>
</dbReference>
<dbReference type="Gene3D" id="1.20.58.530">
    <property type="match status" value="1"/>
</dbReference>
<dbReference type="Gene3D" id="6.10.250.2420">
    <property type="match status" value="1"/>
</dbReference>
<dbReference type="Gene3D" id="3.40.850.10">
    <property type="entry name" value="Kinesin motor domain"/>
    <property type="match status" value="1"/>
</dbReference>
<dbReference type="Gene3D" id="2.30.30.360">
    <property type="entry name" value="Myosin S1 fragment, N-terminal"/>
    <property type="match status" value="1"/>
</dbReference>
<dbReference type="Gene3D" id="1.20.120.720">
    <property type="entry name" value="Myosin VI head, motor domain, U50 subdomain"/>
    <property type="match status" value="1"/>
</dbReference>
<dbReference type="InterPro" id="IPR036961">
    <property type="entry name" value="Kinesin_motor_dom_sf"/>
</dbReference>
<dbReference type="InterPro" id="IPR001609">
    <property type="entry name" value="Myosin_head_motor_dom-like"/>
</dbReference>
<dbReference type="InterPro" id="IPR004009">
    <property type="entry name" value="Myosin_N"/>
</dbReference>
<dbReference type="InterPro" id="IPR008989">
    <property type="entry name" value="Myosin_S1_N"/>
</dbReference>
<dbReference type="InterPro" id="IPR002928">
    <property type="entry name" value="Myosin_tail"/>
</dbReference>
<dbReference type="InterPro" id="IPR027417">
    <property type="entry name" value="P-loop_NTPase"/>
</dbReference>
<dbReference type="InterPro" id="IPR014751">
    <property type="entry name" value="XRCC4-like_C"/>
</dbReference>
<dbReference type="PANTHER" id="PTHR45615">
    <property type="entry name" value="MYOSIN HEAVY CHAIN, NON-MUSCLE"/>
    <property type="match status" value="1"/>
</dbReference>
<dbReference type="PANTHER" id="PTHR45615:SF69">
    <property type="entry name" value="MYOSIN-6"/>
    <property type="match status" value="1"/>
</dbReference>
<dbReference type="Pfam" id="PF00063">
    <property type="entry name" value="Myosin_head"/>
    <property type="match status" value="1"/>
</dbReference>
<dbReference type="Pfam" id="PF02736">
    <property type="entry name" value="Myosin_N"/>
    <property type="match status" value="1"/>
</dbReference>
<dbReference type="Pfam" id="PF01576">
    <property type="entry name" value="Myosin_tail_1"/>
    <property type="match status" value="1"/>
</dbReference>
<dbReference type="PRINTS" id="PR00193">
    <property type="entry name" value="MYOSINHEAVY"/>
</dbReference>
<dbReference type="SMART" id="SM00242">
    <property type="entry name" value="MYSc"/>
    <property type="match status" value="1"/>
</dbReference>
<dbReference type="SUPFAM" id="SSF90257">
    <property type="entry name" value="Myosin rod fragments"/>
    <property type="match status" value="4"/>
</dbReference>
<dbReference type="SUPFAM" id="SSF52540">
    <property type="entry name" value="P-loop containing nucleoside triphosphate hydrolases"/>
    <property type="match status" value="1"/>
</dbReference>
<dbReference type="PROSITE" id="PS50096">
    <property type="entry name" value="IQ"/>
    <property type="match status" value="1"/>
</dbReference>
<dbReference type="PROSITE" id="PS51456">
    <property type="entry name" value="MYOSIN_MOTOR"/>
    <property type="match status" value="1"/>
</dbReference>
<dbReference type="PROSITE" id="PS51844">
    <property type="entry name" value="SH3_LIKE"/>
    <property type="match status" value="1"/>
</dbReference>